<protein>
    <recommendedName>
        <fullName>Zinc finger protein 37 homolog</fullName>
        <shortName>Zfp-37</shortName>
    </recommendedName>
</protein>
<organism>
    <name type="scientific">Homo sapiens</name>
    <name type="common">Human</name>
    <dbReference type="NCBI Taxonomy" id="9606"/>
    <lineage>
        <taxon>Eukaryota</taxon>
        <taxon>Metazoa</taxon>
        <taxon>Chordata</taxon>
        <taxon>Craniata</taxon>
        <taxon>Vertebrata</taxon>
        <taxon>Euteleostomi</taxon>
        <taxon>Mammalia</taxon>
        <taxon>Eutheria</taxon>
        <taxon>Euarchontoglires</taxon>
        <taxon>Primates</taxon>
        <taxon>Haplorrhini</taxon>
        <taxon>Catarrhini</taxon>
        <taxon>Hominidae</taxon>
        <taxon>Homo</taxon>
    </lineage>
</organism>
<name>ZFP37_HUMAN</name>
<comment type="function">
    <text>May be involved in transcriptional regulation.</text>
</comment>
<comment type="subcellular location">
    <subcellularLocation>
        <location evidence="8">Nucleus</location>
    </subcellularLocation>
</comment>
<comment type="alternative products">
    <event type="alternative splicing"/>
    <isoform>
        <id>Q9Y6Q3-1</id>
        <name>1</name>
        <sequence type="displayed"/>
    </isoform>
    <isoform>
        <id>Q9Y6Q3-2</id>
        <name>2</name>
        <sequence type="described" ref="VSP_037941"/>
    </isoform>
    <isoform>
        <id>Q9Y6Q3-3</id>
        <name>3</name>
        <sequence type="described" ref="VSP_055044"/>
    </isoform>
</comment>
<comment type="tissue specificity">
    <text>Expressed at low level in several tissues including fetal cartilage.</text>
</comment>
<comment type="similarity">
    <text evidence="8">Belongs to the krueppel C2H2-type zinc-finger protein family.</text>
</comment>
<comment type="caution">
    <text evidence="8">It is uncertain whether Met-1 or Met-34 is the initiator. Orthologous sequences start at a downstream Met.</text>
</comment>
<evidence type="ECO:0000250" key="1">
    <source>
        <dbReference type="UniProtKB" id="O88553"/>
    </source>
</evidence>
<evidence type="ECO:0000255" key="2">
    <source>
        <dbReference type="PROSITE-ProRule" id="PRU00042"/>
    </source>
</evidence>
<evidence type="ECO:0000255" key="3">
    <source>
        <dbReference type="PROSITE-ProRule" id="PRU00119"/>
    </source>
</evidence>
<evidence type="ECO:0000256" key="4">
    <source>
        <dbReference type="SAM" id="MobiDB-lite"/>
    </source>
</evidence>
<evidence type="ECO:0000269" key="5">
    <source>
    </source>
</evidence>
<evidence type="ECO:0000269" key="6">
    <source>
    </source>
</evidence>
<evidence type="ECO:0000303" key="7">
    <source>
    </source>
</evidence>
<evidence type="ECO:0000305" key="8"/>
<keyword id="KW-0025">Alternative splicing</keyword>
<keyword id="KW-0238">DNA-binding</keyword>
<keyword id="KW-0479">Metal-binding</keyword>
<keyword id="KW-0539">Nucleus</keyword>
<keyword id="KW-0597">Phosphoprotein</keyword>
<keyword id="KW-1267">Proteomics identification</keyword>
<keyword id="KW-1185">Reference proteome</keyword>
<keyword id="KW-0677">Repeat</keyword>
<keyword id="KW-0804">Transcription</keyword>
<keyword id="KW-0805">Transcription regulation</keyword>
<keyword id="KW-0862">Zinc</keyword>
<keyword id="KW-0863">Zinc-finger</keyword>
<proteinExistence type="evidence at protein level"/>
<reference key="1">
    <citation type="journal article" date="1998" name="Mamm. Genome">
        <title>Cloning, characterization, and chromosomal assignment of the human ortholog of murine Zfp-37, a candidate gene for Nager syndrome.</title>
        <authorList>
            <person name="Dreyer S.D."/>
            <person name="Zhou L."/>
            <person name="Machado M.A."/>
            <person name="Horton W.A."/>
            <person name="Zabel B."/>
            <person name="Winterpacht A."/>
            <person name="Lee B."/>
        </authorList>
    </citation>
    <scope>NUCLEOTIDE SEQUENCE [MRNA] (ISOFORM 1)</scope>
    <source>
        <tissue>Cartilage</tissue>
    </source>
</reference>
<reference key="2">
    <citation type="journal article" date="2004" name="Nat. Genet.">
        <title>Complete sequencing and characterization of 21,243 full-length human cDNAs.</title>
        <authorList>
            <person name="Ota T."/>
            <person name="Suzuki Y."/>
            <person name="Nishikawa T."/>
            <person name="Otsuki T."/>
            <person name="Sugiyama T."/>
            <person name="Irie R."/>
            <person name="Wakamatsu A."/>
            <person name="Hayashi K."/>
            <person name="Sato H."/>
            <person name="Nagai K."/>
            <person name="Kimura K."/>
            <person name="Makita H."/>
            <person name="Sekine M."/>
            <person name="Obayashi M."/>
            <person name="Nishi T."/>
            <person name="Shibahara T."/>
            <person name="Tanaka T."/>
            <person name="Ishii S."/>
            <person name="Yamamoto J."/>
            <person name="Saito K."/>
            <person name="Kawai Y."/>
            <person name="Isono Y."/>
            <person name="Nakamura Y."/>
            <person name="Nagahari K."/>
            <person name="Murakami K."/>
            <person name="Yasuda T."/>
            <person name="Iwayanagi T."/>
            <person name="Wagatsuma M."/>
            <person name="Shiratori A."/>
            <person name="Sudo H."/>
            <person name="Hosoiri T."/>
            <person name="Kaku Y."/>
            <person name="Kodaira H."/>
            <person name="Kondo H."/>
            <person name="Sugawara M."/>
            <person name="Takahashi M."/>
            <person name="Kanda K."/>
            <person name="Yokoi T."/>
            <person name="Furuya T."/>
            <person name="Kikkawa E."/>
            <person name="Omura Y."/>
            <person name="Abe K."/>
            <person name="Kamihara K."/>
            <person name="Katsuta N."/>
            <person name="Sato K."/>
            <person name="Tanikawa M."/>
            <person name="Yamazaki M."/>
            <person name="Ninomiya K."/>
            <person name="Ishibashi T."/>
            <person name="Yamashita H."/>
            <person name="Murakawa K."/>
            <person name="Fujimori K."/>
            <person name="Tanai H."/>
            <person name="Kimata M."/>
            <person name="Watanabe M."/>
            <person name="Hiraoka S."/>
            <person name="Chiba Y."/>
            <person name="Ishida S."/>
            <person name="Ono Y."/>
            <person name="Takiguchi S."/>
            <person name="Watanabe S."/>
            <person name="Yosida M."/>
            <person name="Hotuta T."/>
            <person name="Kusano J."/>
            <person name="Kanehori K."/>
            <person name="Takahashi-Fujii A."/>
            <person name="Hara H."/>
            <person name="Tanase T.-O."/>
            <person name="Nomura Y."/>
            <person name="Togiya S."/>
            <person name="Komai F."/>
            <person name="Hara R."/>
            <person name="Takeuchi K."/>
            <person name="Arita M."/>
            <person name="Imose N."/>
            <person name="Musashino K."/>
            <person name="Yuuki H."/>
            <person name="Oshima A."/>
            <person name="Sasaki N."/>
            <person name="Aotsuka S."/>
            <person name="Yoshikawa Y."/>
            <person name="Matsunawa H."/>
            <person name="Ichihara T."/>
            <person name="Shiohata N."/>
            <person name="Sano S."/>
            <person name="Moriya S."/>
            <person name="Momiyama H."/>
            <person name="Satoh N."/>
            <person name="Takami S."/>
            <person name="Terashima Y."/>
            <person name="Suzuki O."/>
            <person name="Nakagawa S."/>
            <person name="Senoh A."/>
            <person name="Mizoguchi H."/>
            <person name="Goto Y."/>
            <person name="Shimizu F."/>
            <person name="Wakebe H."/>
            <person name="Hishigaki H."/>
            <person name="Watanabe T."/>
            <person name="Sugiyama A."/>
            <person name="Takemoto M."/>
            <person name="Kawakami B."/>
            <person name="Yamazaki M."/>
            <person name="Watanabe K."/>
            <person name="Kumagai A."/>
            <person name="Itakura S."/>
            <person name="Fukuzumi Y."/>
            <person name="Fujimori Y."/>
            <person name="Komiyama M."/>
            <person name="Tashiro H."/>
            <person name="Tanigami A."/>
            <person name="Fujiwara T."/>
            <person name="Ono T."/>
            <person name="Yamada K."/>
            <person name="Fujii Y."/>
            <person name="Ozaki K."/>
            <person name="Hirao M."/>
            <person name="Ohmori Y."/>
            <person name="Kawabata A."/>
            <person name="Hikiji T."/>
            <person name="Kobatake N."/>
            <person name="Inagaki H."/>
            <person name="Ikema Y."/>
            <person name="Okamoto S."/>
            <person name="Okitani R."/>
            <person name="Kawakami T."/>
            <person name="Noguchi S."/>
            <person name="Itoh T."/>
            <person name="Shigeta K."/>
            <person name="Senba T."/>
            <person name="Matsumura K."/>
            <person name="Nakajima Y."/>
            <person name="Mizuno T."/>
            <person name="Morinaga M."/>
            <person name="Sasaki M."/>
            <person name="Togashi T."/>
            <person name="Oyama M."/>
            <person name="Hata H."/>
            <person name="Watanabe M."/>
            <person name="Komatsu T."/>
            <person name="Mizushima-Sugano J."/>
            <person name="Satoh T."/>
            <person name="Shirai Y."/>
            <person name="Takahashi Y."/>
            <person name="Nakagawa K."/>
            <person name="Okumura K."/>
            <person name="Nagase T."/>
            <person name="Nomura N."/>
            <person name="Kikuchi H."/>
            <person name="Masuho Y."/>
            <person name="Yamashita R."/>
            <person name="Nakai K."/>
            <person name="Yada T."/>
            <person name="Nakamura Y."/>
            <person name="Ohara O."/>
            <person name="Isogai T."/>
            <person name="Sugano S."/>
        </authorList>
    </citation>
    <scope>NUCLEOTIDE SEQUENCE [LARGE SCALE MRNA] (ISOFORM 2)</scope>
    <scope>VARIANT ASP-7</scope>
    <source>
        <tissue>Spleen</tissue>
    </source>
</reference>
<reference key="3">
    <citation type="journal article" date="2004" name="Nature">
        <title>DNA sequence and analysis of human chromosome 9.</title>
        <authorList>
            <person name="Humphray S.J."/>
            <person name="Oliver K."/>
            <person name="Hunt A.R."/>
            <person name="Plumb R.W."/>
            <person name="Loveland J.E."/>
            <person name="Howe K.L."/>
            <person name="Andrews T.D."/>
            <person name="Searle S."/>
            <person name="Hunt S.E."/>
            <person name="Scott C.E."/>
            <person name="Jones M.C."/>
            <person name="Ainscough R."/>
            <person name="Almeida J.P."/>
            <person name="Ambrose K.D."/>
            <person name="Ashwell R.I.S."/>
            <person name="Babbage A.K."/>
            <person name="Babbage S."/>
            <person name="Bagguley C.L."/>
            <person name="Bailey J."/>
            <person name="Banerjee R."/>
            <person name="Barker D.J."/>
            <person name="Barlow K.F."/>
            <person name="Bates K."/>
            <person name="Beasley H."/>
            <person name="Beasley O."/>
            <person name="Bird C.P."/>
            <person name="Bray-Allen S."/>
            <person name="Brown A.J."/>
            <person name="Brown J.Y."/>
            <person name="Burford D."/>
            <person name="Burrill W."/>
            <person name="Burton J."/>
            <person name="Carder C."/>
            <person name="Carter N.P."/>
            <person name="Chapman J.C."/>
            <person name="Chen Y."/>
            <person name="Clarke G."/>
            <person name="Clark S.Y."/>
            <person name="Clee C.M."/>
            <person name="Clegg S."/>
            <person name="Collier R.E."/>
            <person name="Corby N."/>
            <person name="Crosier M."/>
            <person name="Cummings A.T."/>
            <person name="Davies J."/>
            <person name="Dhami P."/>
            <person name="Dunn M."/>
            <person name="Dutta I."/>
            <person name="Dyer L.W."/>
            <person name="Earthrowl M.E."/>
            <person name="Faulkner L."/>
            <person name="Fleming C.J."/>
            <person name="Frankish A."/>
            <person name="Frankland J.A."/>
            <person name="French L."/>
            <person name="Fricker D.G."/>
            <person name="Garner P."/>
            <person name="Garnett J."/>
            <person name="Ghori J."/>
            <person name="Gilbert J.G.R."/>
            <person name="Glison C."/>
            <person name="Grafham D.V."/>
            <person name="Gribble S."/>
            <person name="Griffiths C."/>
            <person name="Griffiths-Jones S."/>
            <person name="Grocock R."/>
            <person name="Guy J."/>
            <person name="Hall R.E."/>
            <person name="Hammond S."/>
            <person name="Harley J.L."/>
            <person name="Harrison E.S.I."/>
            <person name="Hart E.A."/>
            <person name="Heath P.D."/>
            <person name="Henderson C.D."/>
            <person name="Hopkins B.L."/>
            <person name="Howard P.J."/>
            <person name="Howden P.J."/>
            <person name="Huckle E."/>
            <person name="Johnson C."/>
            <person name="Johnson D."/>
            <person name="Joy A.A."/>
            <person name="Kay M."/>
            <person name="Keenan S."/>
            <person name="Kershaw J.K."/>
            <person name="Kimberley A.M."/>
            <person name="King A."/>
            <person name="Knights A."/>
            <person name="Laird G.K."/>
            <person name="Langford C."/>
            <person name="Lawlor S."/>
            <person name="Leongamornlert D.A."/>
            <person name="Leversha M."/>
            <person name="Lloyd C."/>
            <person name="Lloyd D.M."/>
            <person name="Lovell J."/>
            <person name="Martin S."/>
            <person name="Mashreghi-Mohammadi M."/>
            <person name="Matthews L."/>
            <person name="McLaren S."/>
            <person name="McLay K.E."/>
            <person name="McMurray A."/>
            <person name="Milne S."/>
            <person name="Nickerson T."/>
            <person name="Nisbett J."/>
            <person name="Nordsiek G."/>
            <person name="Pearce A.V."/>
            <person name="Peck A.I."/>
            <person name="Porter K.M."/>
            <person name="Pandian R."/>
            <person name="Pelan S."/>
            <person name="Phillimore B."/>
            <person name="Povey S."/>
            <person name="Ramsey Y."/>
            <person name="Rand V."/>
            <person name="Scharfe M."/>
            <person name="Sehra H.K."/>
            <person name="Shownkeen R."/>
            <person name="Sims S.K."/>
            <person name="Skuce C.D."/>
            <person name="Smith M."/>
            <person name="Steward C.A."/>
            <person name="Swarbreck D."/>
            <person name="Sycamore N."/>
            <person name="Tester J."/>
            <person name="Thorpe A."/>
            <person name="Tracey A."/>
            <person name="Tromans A."/>
            <person name="Thomas D.W."/>
            <person name="Wall M."/>
            <person name="Wallis J.M."/>
            <person name="West A.P."/>
            <person name="Whitehead S.L."/>
            <person name="Willey D.L."/>
            <person name="Williams S.A."/>
            <person name="Wilming L."/>
            <person name="Wray P.W."/>
            <person name="Young L."/>
            <person name="Ashurst J.L."/>
            <person name="Coulson A."/>
            <person name="Blocker H."/>
            <person name="Durbin R.M."/>
            <person name="Sulston J.E."/>
            <person name="Hubbard T."/>
            <person name="Jackson M.J."/>
            <person name="Bentley D.R."/>
            <person name="Beck S."/>
            <person name="Rogers J."/>
            <person name="Dunham I."/>
        </authorList>
    </citation>
    <scope>NUCLEOTIDE SEQUENCE [LARGE SCALE GENOMIC DNA]</scope>
</reference>
<reference key="4">
    <citation type="submission" date="2005-07" db="EMBL/GenBank/DDBJ databases">
        <authorList>
            <person name="Mural R.J."/>
            <person name="Istrail S."/>
            <person name="Sutton G.G."/>
            <person name="Florea L."/>
            <person name="Halpern A.L."/>
            <person name="Mobarry C.M."/>
            <person name="Lippert R."/>
            <person name="Walenz B."/>
            <person name="Shatkay H."/>
            <person name="Dew I."/>
            <person name="Miller J.R."/>
            <person name="Flanigan M.J."/>
            <person name="Edwards N.J."/>
            <person name="Bolanos R."/>
            <person name="Fasulo D."/>
            <person name="Halldorsson B.V."/>
            <person name="Hannenhalli S."/>
            <person name="Turner R."/>
            <person name="Yooseph S."/>
            <person name="Lu F."/>
            <person name="Nusskern D.R."/>
            <person name="Shue B.C."/>
            <person name="Zheng X.H."/>
            <person name="Zhong F."/>
            <person name="Delcher A.L."/>
            <person name="Huson D.H."/>
            <person name="Kravitz S.A."/>
            <person name="Mouchard L."/>
            <person name="Reinert K."/>
            <person name="Remington K.A."/>
            <person name="Clark A.G."/>
            <person name="Waterman M.S."/>
            <person name="Eichler E.E."/>
            <person name="Adams M.D."/>
            <person name="Hunkapiller M.W."/>
            <person name="Myers E.W."/>
            <person name="Venter J.C."/>
        </authorList>
    </citation>
    <scope>NUCLEOTIDE SEQUENCE [LARGE SCALE GENOMIC DNA]</scope>
</reference>
<reference key="5">
    <citation type="journal article" date="2004" name="Genome Res.">
        <title>The status, quality, and expansion of the NIH full-length cDNA project: the Mammalian Gene Collection (MGC).</title>
        <authorList>
            <consortium name="The MGC Project Team"/>
        </authorList>
    </citation>
    <scope>NUCLEOTIDE SEQUENCE [LARGE SCALE MRNA] (ISOFORM 1)</scope>
    <scope>VARIANT ASP-7</scope>
    <source>
        <tissue>Brain</tissue>
    </source>
</reference>
<gene>
    <name type="primary">ZFP37</name>
</gene>
<feature type="chain" id="PRO_0000047293" description="Zinc finger protein 37 homolog">
    <location>
        <begin position="1"/>
        <end position="630"/>
    </location>
</feature>
<feature type="domain" description="KRAB" evidence="3">
    <location>
        <begin position="32"/>
        <end position="103"/>
    </location>
</feature>
<feature type="zinc finger region" description="C2H2-type 1" evidence="2">
    <location>
        <begin position="293"/>
        <end position="315"/>
    </location>
</feature>
<feature type="zinc finger region" description="C2H2-type 2" evidence="2">
    <location>
        <begin position="321"/>
        <end position="343"/>
    </location>
</feature>
<feature type="zinc finger region" description="C2H2-type 3; atypical" evidence="2">
    <location>
        <begin position="349"/>
        <end position="367"/>
    </location>
</feature>
<feature type="zinc finger region" description="C2H2-type 4" evidence="2">
    <location>
        <begin position="377"/>
        <end position="399"/>
    </location>
</feature>
<feature type="zinc finger region" description="C2H2-type 5" evidence="2">
    <location>
        <begin position="405"/>
        <end position="427"/>
    </location>
</feature>
<feature type="zinc finger region" description="C2H2-type 6" evidence="2">
    <location>
        <begin position="433"/>
        <end position="455"/>
    </location>
</feature>
<feature type="zinc finger region" description="C2H2-type 7" evidence="2">
    <location>
        <begin position="461"/>
        <end position="483"/>
    </location>
</feature>
<feature type="zinc finger region" description="C2H2-type 8" evidence="2">
    <location>
        <begin position="489"/>
        <end position="511"/>
    </location>
</feature>
<feature type="zinc finger region" description="C2H2-type 9" evidence="2">
    <location>
        <begin position="517"/>
        <end position="539"/>
    </location>
</feature>
<feature type="zinc finger region" description="C2H2-type 10" evidence="2">
    <location>
        <begin position="545"/>
        <end position="567"/>
    </location>
</feature>
<feature type="zinc finger region" description="C2H2-type 11" evidence="2">
    <location>
        <begin position="573"/>
        <end position="595"/>
    </location>
</feature>
<feature type="zinc finger region" description="C2H2-type 12" evidence="2">
    <location>
        <begin position="601"/>
        <end position="623"/>
    </location>
</feature>
<feature type="region of interest" description="Disordered" evidence="4">
    <location>
        <begin position="1"/>
        <end position="45"/>
    </location>
</feature>
<feature type="region of interest" description="Disordered" evidence="4">
    <location>
        <begin position="77"/>
        <end position="172"/>
    </location>
</feature>
<feature type="region of interest" description="Disordered" evidence="4">
    <location>
        <begin position="193"/>
        <end position="285"/>
    </location>
</feature>
<feature type="compositionally biased region" description="Basic and acidic residues" evidence="4">
    <location>
        <begin position="14"/>
        <end position="30"/>
    </location>
</feature>
<feature type="compositionally biased region" description="Basic and acidic residues" evidence="4">
    <location>
        <begin position="110"/>
        <end position="122"/>
    </location>
</feature>
<feature type="compositionally biased region" description="Basic residues" evidence="4">
    <location>
        <begin position="161"/>
        <end position="172"/>
    </location>
</feature>
<feature type="compositionally biased region" description="Basic and acidic residues" evidence="4">
    <location>
        <begin position="193"/>
        <end position="206"/>
    </location>
</feature>
<feature type="compositionally biased region" description="Basic residues" evidence="4">
    <location>
        <begin position="221"/>
        <end position="231"/>
    </location>
</feature>
<feature type="compositionally biased region" description="Basic and acidic residues" evidence="4">
    <location>
        <begin position="232"/>
        <end position="243"/>
    </location>
</feature>
<feature type="compositionally biased region" description="Basic and acidic residues" evidence="4">
    <location>
        <begin position="260"/>
        <end position="274"/>
    </location>
</feature>
<feature type="modified residue" description="Phosphoserine" evidence="1">
    <location>
        <position position="42"/>
    </location>
</feature>
<feature type="splice variant" id="VSP_037941" description="In isoform 2." evidence="7">
    <original>A</original>
    <variation>AVSVTFKHVTMAFTQK</variation>
    <location>
        <position position="44"/>
    </location>
</feature>
<feature type="splice variant" id="VSP_055044" description="In isoform 3." evidence="8">
    <original>A</original>
    <variation>AK</variation>
    <location>
        <position position="44"/>
    </location>
</feature>
<feature type="sequence variant" id="VAR_058701" description="In dbSNP:rs2282076." evidence="5 6">
    <original>V</original>
    <variation>D</variation>
    <location>
        <position position="7"/>
    </location>
</feature>
<feature type="sequence conflict" description="In Ref. 2; BAG62836." evidence="8" ref="2">
    <original>K</original>
    <variation>KK</variation>
    <location>
        <position position="160"/>
    </location>
</feature>
<feature type="sequence conflict" description="In Ref. 2; BAG62836." evidence="8" ref="2">
    <original>K</original>
    <variation>R</variation>
    <location>
        <position position="282"/>
    </location>
</feature>
<feature type="sequence conflict" description="In Ref. 2; BAG62836." evidence="8" ref="2">
    <original>H</original>
    <variation>R</variation>
    <location>
        <position position="311"/>
    </location>
</feature>
<feature type="sequence conflict" description="In Ref. 2; BAG62836." evidence="8" ref="2">
    <original>C</original>
    <variation>F</variation>
    <location>
        <position position="382"/>
    </location>
</feature>
<dbReference type="EMBL" id="AF022158">
    <property type="protein sequence ID" value="AAC28425.1"/>
    <property type="molecule type" value="mRNA"/>
</dbReference>
<dbReference type="EMBL" id="AK301275">
    <property type="protein sequence ID" value="BAG62836.1"/>
    <property type="molecule type" value="mRNA"/>
</dbReference>
<dbReference type="EMBL" id="AL162588">
    <property type="status" value="NOT_ANNOTATED_CDS"/>
    <property type="molecule type" value="Genomic_DNA"/>
</dbReference>
<dbReference type="EMBL" id="CH878453">
    <property type="protein sequence ID" value="EAW50556.1"/>
    <property type="molecule type" value="Genomic_DNA"/>
</dbReference>
<dbReference type="EMBL" id="BC126390">
    <property type="protein sequence ID" value="AAI26391.1"/>
    <property type="molecule type" value="mRNA"/>
</dbReference>
<dbReference type="CCDS" id="CCDS65109.1">
    <molecule id="Q9Y6Q3-3"/>
</dbReference>
<dbReference type="CCDS" id="CCDS65110.1">
    <molecule id="Q9Y6Q3-2"/>
</dbReference>
<dbReference type="CCDS" id="CCDS6787.1">
    <molecule id="Q9Y6Q3-1"/>
</dbReference>
<dbReference type="RefSeq" id="NP_001269444.1">
    <molecule id="Q9Y6Q3-2"/>
    <property type="nucleotide sequence ID" value="NM_001282515.2"/>
</dbReference>
<dbReference type="RefSeq" id="NP_001269447.1">
    <molecule id="Q9Y6Q3-3"/>
    <property type="nucleotide sequence ID" value="NM_001282518.2"/>
</dbReference>
<dbReference type="RefSeq" id="NP_003399.1">
    <molecule id="Q9Y6Q3-1"/>
    <property type="nucleotide sequence ID" value="NM_003408.3"/>
</dbReference>
<dbReference type="SMR" id="Q9Y6Q3"/>
<dbReference type="BioGRID" id="113371">
    <property type="interactions" value="5"/>
</dbReference>
<dbReference type="FunCoup" id="Q9Y6Q3">
    <property type="interactions" value="69"/>
</dbReference>
<dbReference type="IntAct" id="Q9Y6Q3">
    <property type="interactions" value="3"/>
</dbReference>
<dbReference type="STRING" id="9606.ENSP00000452552"/>
<dbReference type="iPTMnet" id="Q9Y6Q3"/>
<dbReference type="PhosphoSitePlus" id="Q9Y6Q3"/>
<dbReference type="BioMuta" id="ZFP37"/>
<dbReference type="DMDM" id="257051078"/>
<dbReference type="jPOST" id="Q9Y6Q3"/>
<dbReference type="MassIVE" id="Q9Y6Q3"/>
<dbReference type="PaxDb" id="9606-ENSP00000452552"/>
<dbReference type="PeptideAtlas" id="Q9Y6Q3"/>
<dbReference type="ProteomicsDB" id="32981"/>
<dbReference type="ProteomicsDB" id="86761">
    <molecule id="Q9Y6Q3-1"/>
</dbReference>
<dbReference type="ProteomicsDB" id="86762">
    <molecule id="Q9Y6Q3-2"/>
</dbReference>
<dbReference type="Pumba" id="Q9Y6Q3"/>
<dbReference type="Antibodypedia" id="29718">
    <property type="antibodies" value="116 antibodies from 17 providers"/>
</dbReference>
<dbReference type="DNASU" id="7539"/>
<dbReference type="Ensembl" id="ENST00000374227.8">
    <molecule id="Q9Y6Q3-1"/>
    <property type="protein sequence ID" value="ENSP00000363344.3"/>
    <property type="gene ID" value="ENSG00000136866.14"/>
</dbReference>
<dbReference type="Ensembl" id="ENST00000553380.1">
    <molecule id="Q9Y6Q3-2"/>
    <property type="protein sequence ID" value="ENSP00000452552.1"/>
    <property type="gene ID" value="ENSG00000136866.14"/>
</dbReference>
<dbReference type="Ensembl" id="ENST00000555206.5">
    <molecule id="Q9Y6Q3-3"/>
    <property type="protein sequence ID" value="ENSP00000451310.1"/>
    <property type="gene ID" value="ENSG00000136866.14"/>
</dbReference>
<dbReference type="GeneID" id="7539"/>
<dbReference type="KEGG" id="hsa:7539"/>
<dbReference type="MANE-Select" id="ENST00000374227.8">
    <property type="protein sequence ID" value="ENSP00000363344.3"/>
    <property type="RefSeq nucleotide sequence ID" value="NM_003408.3"/>
    <property type="RefSeq protein sequence ID" value="NP_003399.1"/>
</dbReference>
<dbReference type="UCSC" id="uc004bgm.3">
    <molecule id="Q9Y6Q3-1"/>
    <property type="organism name" value="human"/>
</dbReference>
<dbReference type="AGR" id="HGNC:12863"/>
<dbReference type="CTD" id="7539"/>
<dbReference type="DisGeNET" id="7539"/>
<dbReference type="GeneCards" id="ZFP37"/>
<dbReference type="HGNC" id="HGNC:12863">
    <property type="gene designation" value="ZFP37"/>
</dbReference>
<dbReference type="HPA" id="ENSG00000136866">
    <property type="expression patterns" value="Low tissue specificity"/>
</dbReference>
<dbReference type="MIM" id="602951">
    <property type="type" value="gene"/>
</dbReference>
<dbReference type="neXtProt" id="NX_Q9Y6Q3"/>
<dbReference type="OpenTargets" id="ENSG00000136866"/>
<dbReference type="PharmGKB" id="PA37452"/>
<dbReference type="VEuPathDB" id="HostDB:ENSG00000136866"/>
<dbReference type="eggNOG" id="KOG1721">
    <property type="taxonomic scope" value="Eukaryota"/>
</dbReference>
<dbReference type="GeneTree" id="ENSGT00940000162711"/>
<dbReference type="HOGENOM" id="CLU_002678_44_5_1"/>
<dbReference type="InParanoid" id="Q9Y6Q3"/>
<dbReference type="OMA" id="QCGKAHS"/>
<dbReference type="OrthoDB" id="6591996at2759"/>
<dbReference type="PAN-GO" id="Q9Y6Q3">
    <property type="GO annotations" value="3 GO annotations based on evolutionary models"/>
</dbReference>
<dbReference type="PhylomeDB" id="Q9Y6Q3"/>
<dbReference type="TreeFam" id="TF350860"/>
<dbReference type="PathwayCommons" id="Q9Y6Q3"/>
<dbReference type="Reactome" id="R-HSA-212436">
    <property type="pathway name" value="Generic Transcription Pathway"/>
</dbReference>
<dbReference type="SignaLink" id="Q9Y6Q3"/>
<dbReference type="BioGRID-ORCS" id="7539">
    <property type="hits" value="17 hits in 1171 CRISPR screens"/>
</dbReference>
<dbReference type="GenomeRNAi" id="7539"/>
<dbReference type="Pharos" id="Q9Y6Q3">
    <property type="development level" value="Tbio"/>
</dbReference>
<dbReference type="PRO" id="PR:Q9Y6Q3"/>
<dbReference type="Proteomes" id="UP000005640">
    <property type="component" value="Chromosome 9"/>
</dbReference>
<dbReference type="RNAct" id="Q9Y6Q3">
    <property type="molecule type" value="protein"/>
</dbReference>
<dbReference type="Bgee" id="ENSG00000136866">
    <property type="expression patterns" value="Expressed in cortical plate and 122 other cell types or tissues"/>
</dbReference>
<dbReference type="GO" id="GO:0005634">
    <property type="term" value="C:nucleus"/>
    <property type="evidence" value="ECO:0000318"/>
    <property type="project" value="GO_Central"/>
</dbReference>
<dbReference type="GO" id="GO:0003700">
    <property type="term" value="F:DNA-binding transcription factor activity"/>
    <property type="evidence" value="ECO:0000303"/>
    <property type="project" value="UniProtKB"/>
</dbReference>
<dbReference type="GO" id="GO:0000981">
    <property type="term" value="F:DNA-binding transcription factor activity, RNA polymerase II-specific"/>
    <property type="evidence" value="ECO:0000318"/>
    <property type="project" value="GO_Central"/>
</dbReference>
<dbReference type="GO" id="GO:0000977">
    <property type="term" value="F:RNA polymerase II transcription regulatory region sequence-specific DNA binding"/>
    <property type="evidence" value="ECO:0000318"/>
    <property type="project" value="GO_Central"/>
</dbReference>
<dbReference type="GO" id="GO:0008270">
    <property type="term" value="F:zinc ion binding"/>
    <property type="evidence" value="ECO:0000303"/>
    <property type="project" value="UniProtKB"/>
</dbReference>
<dbReference type="GO" id="GO:0006355">
    <property type="term" value="P:regulation of DNA-templated transcription"/>
    <property type="evidence" value="ECO:0000303"/>
    <property type="project" value="UniProtKB"/>
</dbReference>
<dbReference type="GO" id="GO:0006357">
    <property type="term" value="P:regulation of transcription by RNA polymerase II"/>
    <property type="evidence" value="ECO:0000318"/>
    <property type="project" value="GO_Central"/>
</dbReference>
<dbReference type="CDD" id="cd07765">
    <property type="entry name" value="KRAB_A-box"/>
    <property type="match status" value="1"/>
</dbReference>
<dbReference type="FunFam" id="3.30.160.60:FF:004137">
    <property type="match status" value="1"/>
</dbReference>
<dbReference type="FunFam" id="3.30.160.60:FF:002295">
    <property type="entry name" value="ZFP37 zinc finger protein"/>
    <property type="match status" value="2"/>
</dbReference>
<dbReference type="FunFam" id="3.30.160.60:FF:000295">
    <property type="entry name" value="zinc finger protein 19"/>
    <property type="match status" value="1"/>
</dbReference>
<dbReference type="FunFam" id="3.30.160.60:FF:001530">
    <property type="entry name" value="Zinc finger protein 268"/>
    <property type="match status" value="1"/>
</dbReference>
<dbReference type="FunFam" id="3.30.160.60:FF:000352">
    <property type="entry name" value="zinc finger protein 3 homolog"/>
    <property type="match status" value="1"/>
</dbReference>
<dbReference type="FunFam" id="3.30.160.60:FF:001938">
    <property type="entry name" value="Zinc finger protein 300"/>
    <property type="match status" value="1"/>
</dbReference>
<dbReference type="FunFam" id="3.30.160.60:FF:002402">
    <property type="entry name" value="Zinc finger protein 347"/>
    <property type="match status" value="1"/>
</dbReference>
<dbReference type="FunFam" id="3.30.160.60:FF:001244">
    <property type="entry name" value="Zinc finger protein 37 homolog"/>
    <property type="match status" value="1"/>
</dbReference>
<dbReference type="FunFam" id="3.30.160.60:FF:000016">
    <property type="entry name" value="zinc finger protein 37 homolog"/>
    <property type="match status" value="1"/>
</dbReference>
<dbReference type="FunFam" id="3.30.160.60:FF:000044">
    <property type="entry name" value="zinc finger protein 37 homolog"/>
    <property type="match status" value="1"/>
</dbReference>
<dbReference type="FunFam" id="3.30.160.60:FF:001498">
    <property type="entry name" value="Zinc finger protein 404"/>
    <property type="match status" value="1"/>
</dbReference>
<dbReference type="FunFam" id="3.30.160.60:FF:002254">
    <property type="entry name" value="Zinc finger protein 540"/>
    <property type="match status" value="1"/>
</dbReference>
<dbReference type="Gene3D" id="6.10.140.140">
    <property type="match status" value="1"/>
</dbReference>
<dbReference type="Gene3D" id="3.30.160.60">
    <property type="entry name" value="Classic Zinc Finger"/>
    <property type="match status" value="12"/>
</dbReference>
<dbReference type="InterPro" id="IPR001909">
    <property type="entry name" value="KRAB"/>
</dbReference>
<dbReference type="InterPro" id="IPR036051">
    <property type="entry name" value="KRAB_dom_sf"/>
</dbReference>
<dbReference type="InterPro" id="IPR050826">
    <property type="entry name" value="Krueppel_C2H2_ZnFinger"/>
</dbReference>
<dbReference type="InterPro" id="IPR056436">
    <property type="entry name" value="Znf-C2H2_ZIC1-5/GLI1-3-like"/>
</dbReference>
<dbReference type="InterPro" id="IPR036236">
    <property type="entry name" value="Znf_C2H2_sf"/>
</dbReference>
<dbReference type="InterPro" id="IPR013087">
    <property type="entry name" value="Znf_C2H2_type"/>
</dbReference>
<dbReference type="PANTHER" id="PTHR24377">
    <property type="entry name" value="IP01015P-RELATED"/>
    <property type="match status" value="1"/>
</dbReference>
<dbReference type="Pfam" id="PF01352">
    <property type="entry name" value="KRAB"/>
    <property type="match status" value="1"/>
</dbReference>
<dbReference type="Pfam" id="PF00096">
    <property type="entry name" value="zf-C2H2"/>
    <property type="match status" value="10"/>
</dbReference>
<dbReference type="Pfam" id="PF23561">
    <property type="entry name" value="zf-C2H2_15"/>
    <property type="match status" value="1"/>
</dbReference>
<dbReference type="SMART" id="SM00349">
    <property type="entry name" value="KRAB"/>
    <property type="match status" value="1"/>
</dbReference>
<dbReference type="SMART" id="SM00355">
    <property type="entry name" value="ZnF_C2H2"/>
    <property type="match status" value="12"/>
</dbReference>
<dbReference type="SUPFAM" id="SSF57667">
    <property type="entry name" value="beta-beta-alpha zinc fingers"/>
    <property type="match status" value="7"/>
</dbReference>
<dbReference type="SUPFAM" id="SSF109640">
    <property type="entry name" value="KRAB domain (Kruppel-associated box)"/>
    <property type="match status" value="1"/>
</dbReference>
<dbReference type="PROSITE" id="PS50805">
    <property type="entry name" value="KRAB"/>
    <property type="match status" value="1"/>
</dbReference>
<dbReference type="PROSITE" id="PS00028">
    <property type="entry name" value="ZINC_FINGER_C2H2_1"/>
    <property type="match status" value="11"/>
</dbReference>
<dbReference type="PROSITE" id="PS50157">
    <property type="entry name" value="ZINC_FINGER_C2H2_2"/>
    <property type="match status" value="12"/>
</dbReference>
<accession>Q9Y6Q3</accession>
<accession>A0AVJ9</accession>
<accession>B4DVX4</accession>
<accession>G3V3L7</accession>
<accession>Q5T7Q4</accession>
<sequence length="630" mass="71209">MSVSSGVQILTKPETVDRRRSAETTKEAGRPLEMAVSEPEASAAEWKQLDPAQSNLYNDVMLENYCNQASMGCQAPKPDMISKLEKGEAPWLGKGKRPSQGCPSKIARPKQKETDGKVQKDDDQLENIQKSQNKLLREVAVKKKTQAKKNGSDCGSLGKKNNLHKKHVPSKKRLLKFESCGKILKQNLDLPDHSRNCVKRKSDAAKEHKKSFNHSLSDTRKGKKQTGKKHEKLSSHSSSDKCNKTGKKHDKLCCHSSSHIKQDKIQTGEKHEKSPSLSSSTKHEKPQACVKPYECNQCGKVLSHKQGLIDHQRVHTGEKPYECNECGIAFSQKSHLVVHQRTHTGEKPYECIQCGKAHGHKHALTDHLRIHTGEKPYECAECGKTFRHSSNLIQHVRSHTGEKPYECKECGKSFRYNSSLTEHVRTHTGEIPYECNECGKAFKYSSSLTKHMRIHTGEKPFECNECGKAFSKKSHLIIHQRTHTKEKPYKCNECGKAFGHSSSLTYHMRTHTGESPFECNQCGKGFKQIEGLTQHQRVHTGEKPYECNECGKAFSQKSHLIVHQRTHTGEKPYECNECEKAFNAKSQLVIHQRSHTGEKPYECNECGKTFKQNASLTKHVKTHSEDKSHE</sequence>